<feature type="chain" id="PRO_0000353742" description="Cytochrome c biogenesis protein CcsA">
    <location>
        <begin position="1"/>
        <end position="322"/>
    </location>
</feature>
<feature type="transmembrane region" description="Helical" evidence="1">
    <location>
        <begin position="15"/>
        <end position="35"/>
    </location>
</feature>
<feature type="transmembrane region" description="Helical" evidence="1">
    <location>
        <begin position="45"/>
        <end position="65"/>
    </location>
</feature>
<feature type="transmembrane region" description="Helical" evidence="1">
    <location>
        <begin position="72"/>
        <end position="92"/>
    </location>
</feature>
<feature type="transmembrane region" description="Helical" evidence="1">
    <location>
        <begin position="98"/>
        <end position="120"/>
    </location>
</feature>
<feature type="transmembrane region" description="Helical" evidence="1">
    <location>
        <begin position="144"/>
        <end position="164"/>
    </location>
</feature>
<feature type="transmembrane region" description="Helical" evidence="1">
    <location>
        <begin position="226"/>
        <end position="246"/>
    </location>
</feature>
<feature type="transmembrane region" description="Helical" evidence="1">
    <location>
        <begin position="253"/>
        <end position="273"/>
    </location>
</feature>
<feature type="transmembrane region" description="Helical" evidence="1">
    <location>
        <begin position="287"/>
        <end position="307"/>
    </location>
</feature>
<evidence type="ECO:0000255" key="1">
    <source>
        <dbReference type="HAMAP-Rule" id="MF_01391"/>
    </source>
</evidence>
<protein>
    <recommendedName>
        <fullName evidence="1">Cytochrome c biogenesis protein CcsA</fullName>
    </recommendedName>
</protein>
<keyword id="KW-0150">Chloroplast</keyword>
<keyword id="KW-0201">Cytochrome c-type biogenesis</keyword>
<keyword id="KW-0472">Membrane</keyword>
<keyword id="KW-0934">Plastid</keyword>
<keyword id="KW-1185">Reference proteome</keyword>
<keyword id="KW-0793">Thylakoid</keyword>
<keyword id="KW-0812">Transmembrane</keyword>
<keyword id="KW-1133">Transmembrane helix</keyword>
<proteinExistence type="inferred from homology"/>
<organism>
    <name type="scientific">Coffea arabica</name>
    <name type="common">Arabian coffee</name>
    <dbReference type="NCBI Taxonomy" id="13443"/>
    <lineage>
        <taxon>Eukaryota</taxon>
        <taxon>Viridiplantae</taxon>
        <taxon>Streptophyta</taxon>
        <taxon>Embryophyta</taxon>
        <taxon>Tracheophyta</taxon>
        <taxon>Spermatophyta</taxon>
        <taxon>Magnoliopsida</taxon>
        <taxon>eudicotyledons</taxon>
        <taxon>Gunneridae</taxon>
        <taxon>Pentapetalae</taxon>
        <taxon>asterids</taxon>
        <taxon>lamiids</taxon>
        <taxon>Gentianales</taxon>
        <taxon>Rubiaceae</taxon>
        <taxon>Ixoroideae</taxon>
        <taxon>Gardenieae complex</taxon>
        <taxon>Bertiereae - Coffeeae clade</taxon>
        <taxon>Coffeeae</taxon>
        <taxon>Coffea</taxon>
    </lineage>
</organism>
<accession>A0A384</accession>
<sequence>MIFSTVEHILTHISFSIVSIIITMRLISFFLVDGIVQLYDSSEKGMIVTFLCLTGLLVTRWTYSGHFPLSNLYESLIFLSWSFSLIHIVPYFKKNKKYLSTITGSSVVFTQGFTTSGLLTEIDQSSILVPALQSEWLIMHVTMMILGYASLLCGSLLSIALLVITFRKNKKILYRNNLLLNESFFFVEIEYMNERSNLLQNTSFFSAKNYYRSQLIQQLDYWSSRGISLGFIFLTIGILSGAVWANEAWGSYWNWDPKETWAFITWIIFAIYLHTRTTRNPKCANSAIVASIGFLIIWICYFGVNLLGIGLHSYGSFTLLAN</sequence>
<geneLocation type="chloroplast"/>
<comment type="function">
    <text evidence="1">Required during biogenesis of c-type cytochromes (cytochrome c6 and cytochrome f) at the step of heme attachment.</text>
</comment>
<comment type="subunit">
    <text evidence="1">May interact with Ccs1.</text>
</comment>
<comment type="subcellular location">
    <subcellularLocation>
        <location evidence="1">Plastid</location>
        <location evidence="1">Chloroplast thylakoid membrane</location>
        <topology evidence="1">Multi-pass membrane protein</topology>
    </subcellularLocation>
</comment>
<comment type="similarity">
    <text evidence="1">Belongs to the CcmF/CycK/Ccl1/NrfE/CcsA family.</text>
</comment>
<name>CCSA_COFAR</name>
<reference key="1">
    <citation type="journal article" date="2007" name="Plant Biotechnol. J.">
        <title>The complete nucleotide sequence of the coffee (Coffea arabica L.) chloroplast genome: organization and implications for biotechnology and phylogenetic relationships amongst angiosperms.</title>
        <authorList>
            <person name="Samson N."/>
            <person name="Bausher M.G."/>
            <person name="Lee S.-B."/>
            <person name="Jansen R.K."/>
            <person name="Daniell H."/>
        </authorList>
    </citation>
    <scope>NUCLEOTIDE SEQUENCE [LARGE SCALE GENOMIC DNA]</scope>
</reference>
<gene>
    <name evidence="1" type="primary">ccsA</name>
</gene>
<dbReference type="EMBL" id="EF044213">
    <property type="protein sequence ID" value="ABJ89728.1"/>
    <property type="molecule type" value="Genomic_DNA"/>
</dbReference>
<dbReference type="RefSeq" id="YP_817531.1">
    <property type="nucleotide sequence ID" value="NC_008535.1"/>
</dbReference>
<dbReference type="SMR" id="A0A384"/>
<dbReference type="GeneID" id="4421850"/>
<dbReference type="OrthoDB" id="1640at2759"/>
<dbReference type="Proteomes" id="UP000515148">
    <property type="component" value="Chloroplast Pltd"/>
</dbReference>
<dbReference type="GO" id="GO:0009535">
    <property type="term" value="C:chloroplast thylakoid membrane"/>
    <property type="evidence" value="ECO:0007669"/>
    <property type="project" value="UniProtKB-SubCell"/>
</dbReference>
<dbReference type="GO" id="GO:0005886">
    <property type="term" value="C:plasma membrane"/>
    <property type="evidence" value="ECO:0007669"/>
    <property type="project" value="TreeGrafter"/>
</dbReference>
<dbReference type="GO" id="GO:0020037">
    <property type="term" value="F:heme binding"/>
    <property type="evidence" value="ECO:0007669"/>
    <property type="project" value="InterPro"/>
</dbReference>
<dbReference type="GO" id="GO:0017004">
    <property type="term" value="P:cytochrome complex assembly"/>
    <property type="evidence" value="ECO:0007669"/>
    <property type="project" value="UniProtKB-UniRule"/>
</dbReference>
<dbReference type="HAMAP" id="MF_01391">
    <property type="entry name" value="CytC_CcsA"/>
    <property type="match status" value="1"/>
</dbReference>
<dbReference type="InterPro" id="IPR002541">
    <property type="entry name" value="Cyt_c_assembly"/>
</dbReference>
<dbReference type="InterPro" id="IPR017562">
    <property type="entry name" value="Cyt_c_biogenesis_CcsA"/>
</dbReference>
<dbReference type="InterPro" id="IPR045062">
    <property type="entry name" value="Cyt_c_biogenesis_CcsA/CcmC"/>
</dbReference>
<dbReference type="NCBIfam" id="TIGR03144">
    <property type="entry name" value="cytochr_II_ccsB"/>
    <property type="match status" value="1"/>
</dbReference>
<dbReference type="PANTHER" id="PTHR30071:SF1">
    <property type="entry name" value="CYTOCHROME B_B6 PROTEIN-RELATED"/>
    <property type="match status" value="1"/>
</dbReference>
<dbReference type="PANTHER" id="PTHR30071">
    <property type="entry name" value="HEME EXPORTER PROTEIN C"/>
    <property type="match status" value="1"/>
</dbReference>
<dbReference type="Pfam" id="PF01578">
    <property type="entry name" value="Cytochrom_C_asm"/>
    <property type="match status" value="1"/>
</dbReference>